<organism>
    <name type="scientific">Mus musculus</name>
    <name type="common">Mouse</name>
    <dbReference type="NCBI Taxonomy" id="10090"/>
    <lineage>
        <taxon>Eukaryota</taxon>
        <taxon>Metazoa</taxon>
        <taxon>Chordata</taxon>
        <taxon>Craniata</taxon>
        <taxon>Vertebrata</taxon>
        <taxon>Euteleostomi</taxon>
        <taxon>Mammalia</taxon>
        <taxon>Eutheria</taxon>
        <taxon>Euarchontoglires</taxon>
        <taxon>Glires</taxon>
        <taxon>Rodentia</taxon>
        <taxon>Myomorpha</taxon>
        <taxon>Muroidea</taxon>
        <taxon>Muridae</taxon>
        <taxon>Murinae</taxon>
        <taxon>Mus</taxon>
        <taxon>Mus</taxon>
    </lineage>
</organism>
<keyword id="KW-0130">Cell adhesion</keyword>
<keyword id="KW-1003">Cell membrane</keyword>
<keyword id="KW-0145">Chemotaxis</keyword>
<keyword id="KW-0202">Cytokine</keyword>
<keyword id="KW-1015">Disulfide bond</keyword>
<keyword id="KW-0395">Inflammatory response</keyword>
<keyword id="KW-0472">Membrane</keyword>
<keyword id="KW-1185">Reference proteome</keyword>
<keyword id="KW-0964">Secreted</keyword>
<keyword id="KW-0732">Signal</keyword>
<keyword id="KW-0812">Transmembrane</keyword>
<keyword id="KW-1133">Transmembrane helix</keyword>
<accession>O35188</accession>
<accession>O35933</accession>
<accession>Q91V44</accession>
<name>X3CL1_MOUSE</name>
<comment type="function">
    <text evidence="1 4 5 9 10">Chemokine that acts as a ligand for both CX3CR1 and integrins ITGAV:ITGB3 and ITGA4:ITGB1 (PubMed:10187784, PubMed:18971423). The CX3CR1-CX3CL1 signaling exerts distinct functions in different tissue compartments, such as immune response, inflammation, cell adhesion and chemotaxis (PubMed:10187784, PubMed:10382755, PubMed:18971423, PubMed:9177350). Regulates leukocyte adhesion and migration processes at the endothelium (PubMed:10382755, PubMed:9177350). Can activate integrins in both a CX3CR1-dependent and CX3CR1-independent manner (By similarity). In the presence of CX3CR1, activates integrins by binding to the classical ligand-binding site (site 1) in integrins (By similarity). In the absence of CX3CR1, binds to a second site (site 2) in integrins which is distinct from site 1 and enhances the binding of other integrin ligands to site 1 (By similarity).</text>
</comment>
<comment type="function">
    <molecule>Processed fractalkine</molecule>
    <text evidence="1">The soluble form is chemotactic for T-cells and monocytes, but not for neutrophils.</text>
</comment>
<comment type="function">
    <molecule>Fractalkine</molecule>
    <text evidence="1">The membrane-bound form promotes adhesion of those leukocytes to endothelial cells.</text>
</comment>
<comment type="subunit">
    <text evidence="1">Monomer (By similarity). Forms a ternary complex with CX3CR1 and ITGAV:ITGB3 or ITGA4:ITGB1 (By similarity).</text>
</comment>
<comment type="subcellular location">
    <subcellularLocation>
        <location evidence="10">Cell membrane</location>
        <topology evidence="2">Single-pass type I membrane protein</topology>
    </subcellularLocation>
</comment>
<comment type="subcellular location">
    <molecule>Processed fractalkine</molecule>
    <subcellularLocation>
        <location evidence="5">Secreted</location>
    </subcellularLocation>
</comment>
<comment type="tissue specificity">
    <text evidence="6 8 10 11 12">Highest levels in brain (PubMed:10508268, PubMed:9177350, PubMed:9479488, PubMed:9845323). Lower levels in kidney, heart and lung (PubMed:10508268, PubMed:9177350, PubMed:9479488). Also found in skeletal muscle and testis (PubMed:9177350, PubMed:9479488). Highly expressed in lesional smooth muscle cells, but not macrophages (PubMed:12569158). Low levels of ABCD-3 mRNA were also found in anti-CD40-stimulated splenic B-cells, but not in resting B-cells. Also expressed in dendritic cells (PubMed:10508268).</text>
</comment>
<comment type="induction">
    <text evidence="10">By 12-O-tetradecanoylphorbol-13-acetate (TPA) and lipopolysaccharides (LPS) in bone marrow stroma cells.</text>
</comment>
<comment type="PTM">
    <text evidence="5">A soluble short 80 kDa form may be released by proteolytic cleavage from the long membrane-anchored form.</text>
</comment>
<comment type="disruption phenotype">
    <text evidence="7">No visible phenotype (PubMed:11287620). Mice develop normally and have normal migration of leukocytes to lymphoid tissue and peripheral sites in several models of inflammation (PubMed:11287620).</text>
</comment>
<comment type="similarity">
    <text evidence="18">Belongs to the intercrine delta family.</text>
</comment>
<evidence type="ECO:0000250" key="1">
    <source>
        <dbReference type="UniProtKB" id="P78423"/>
    </source>
</evidence>
<evidence type="ECO:0000255" key="2"/>
<evidence type="ECO:0000256" key="3">
    <source>
        <dbReference type="SAM" id="MobiDB-lite"/>
    </source>
</evidence>
<evidence type="ECO:0000269" key="4">
    <source>
    </source>
</evidence>
<evidence type="ECO:0000269" key="5">
    <source>
    </source>
</evidence>
<evidence type="ECO:0000269" key="6">
    <source>
    </source>
</evidence>
<evidence type="ECO:0000269" key="7">
    <source>
    </source>
</evidence>
<evidence type="ECO:0000269" key="8">
    <source>
    </source>
</evidence>
<evidence type="ECO:0000269" key="9">
    <source>
    </source>
</evidence>
<evidence type="ECO:0000269" key="10">
    <source>
    </source>
</evidence>
<evidence type="ECO:0000269" key="11">
    <source>
    </source>
</evidence>
<evidence type="ECO:0000269" key="12">
    <source>
    </source>
</evidence>
<evidence type="ECO:0000303" key="13">
    <source>
    </source>
</evidence>
<evidence type="ECO:0000303" key="14">
    <source>
    </source>
</evidence>
<evidence type="ECO:0000303" key="15">
    <source>
    </source>
</evidence>
<evidence type="ECO:0000303" key="16">
    <source>
    </source>
</evidence>
<evidence type="ECO:0000303" key="17">
    <source>
    </source>
</evidence>
<evidence type="ECO:0000305" key="18"/>
<evidence type="ECO:0000312" key="19">
    <source>
        <dbReference type="MGI" id="MGI:1097153"/>
    </source>
</evidence>
<gene>
    <name evidence="17 19" type="primary">Cx3cl1</name>
    <name evidence="17" type="synonym">Cx3c</name>
    <name evidence="13" type="synonym">Fkn</name>
    <name type="synonym">Scyd1</name>
</gene>
<reference key="1">
    <citation type="journal article" date="1997" name="Nature">
        <title>Neurotactin, a membrane-anchored chemokine upregulated in brain inflammation.</title>
        <authorList>
            <person name="Pan Y."/>
            <person name="Lloyd C."/>
            <person name="Zhou H."/>
            <person name="Dolich S."/>
            <person name="Deeds J."/>
            <person name="Gonzalo J.-A."/>
            <person name="Vath J."/>
            <person name="Gosselin M."/>
            <person name="Ma J."/>
            <person name="Dussault B."/>
            <person name="Woolf E."/>
            <person name="Alperin G."/>
            <person name="Culpepper J."/>
            <person name="Gutierrez-Ramos J.-C."/>
            <person name="Gearing D.P."/>
        </authorList>
    </citation>
    <scope>NUCLEOTIDE SEQUENCE [MRNA]</scope>
    <scope>FUNCTION</scope>
    <scope>TISSUE SPECIFICITY</scope>
    <scope>SUBCELLULAR LOCATION</scope>
    <scope>INDUCTION</scope>
</reference>
<reference key="2">
    <citation type="journal article" date="1998" name="Genomics">
        <title>Cloning and characterization of a new type of mouse chemokine.</title>
        <authorList>
            <person name="Rossi D.L."/>
            <person name="Hardiman G."/>
            <person name="Copeland N.G."/>
            <person name="Gilbert D.J."/>
            <person name="Jenkins N."/>
            <person name="Zlotnik A."/>
            <person name="Bazan J.F."/>
        </authorList>
    </citation>
    <scope>NUCLEOTIDE SEQUENCE [MRNA]</scope>
    <scope>TISSUE SPECIFICITY</scope>
    <source>
        <strain>BALB/cJ</strain>
        <tissue>Brain</tissue>
    </source>
</reference>
<reference key="3">
    <citation type="journal article" date="1999" name="Eur. J. Immunol.">
        <title>Fractalkine and macrophage-derived chemokine: T cell-attracting chemokines expressed in T cell area dendritic cells.</title>
        <authorList>
            <person name="Kanazawa N."/>
            <person name="Nakamura T."/>
            <person name="Tashiro K."/>
            <person name="Muramatsu M."/>
            <person name="Morita K."/>
            <person name="Yoneda K."/>
            <person name="Inaba K."/>
            <person name="Imamura S."/>
            <person name="Honjo T."/>
        </authorList>
    </citation>
    <scope>NUCLEOTIDE SEQUENCE [MRNA]</scope>
    <scope>FUNCTION</scope>
    <scope>PROTEOLYTIC CLEAVAGE</scope>
    <scope>SUBCELLULAR LOCATION</scope>
    <source>
        <strain>BALB/cJ</strain>
    </source>
</reference>
<reference key="4">
    <citation type="journal article" date="2005" name="Science">
        <title>The transcriptional landscape of the mammalian genome.</title>
        <authorList>
            <person name="Carninci P."/>
            <person name="Kasukawa T."/>
            <person name="Katayama S."/>
            <person name="Gough J."/>
            <person name="Frith M.C."/>
            <person name="Maeda N."/>
            <person name="Oyama R."/>
            <person name="Ravasi T."/>
            <person name="Lenhard B."/>
            <person name="Wells C."/>
            <person name="Kodzius R."/>
            <person name="Shimokawa K."/>
            <person name="Bajic V.B."/>
            <person name="Brenner S.E."/>
            <person name="Batalov S."/>
            <person name="Forrest A.R."/>
            <person name="Zavolan M."/>
            <person name="Davis M.J."/>
            <person name="Wilming L.G."/>
            <person name="Aidinis V."/>
            <person name="Allen J.E."/>
            <person name="Ambesi-Impiombato A."/>
            <person name="Apweiler R."/>
            <person name="Aturaliya R.N."/>
            <person name="Bailey T.L."/>
            <person name="Bansal M."/>
            <person name="Baxter L."/>
            <person name="Beisel K.W."/>
            <person name="Bersano T."/>
            <person name="Bono H."/>
            <person name="Chalk A.M."/>
            <person name="Chiu K.P."/>
            <person name="Choudhary V."/>
            <person name="Christoffels A."/>
            <person name="Clutterbuck D.R."/>
            <person name="Crowe M.L."/>
            <person name="Dalla E."/>
            <person name="Dalrymple B.P."/>
            <person name="de Bono B."/>
            <person name="Della Gatta G."/>
            <person name="di Bernardo D."/>
            <person name="Down T."/>
            <person name="Engstrom P."/>
            <person name="Fagiolini M."/>
            <person name="Faulkner G."/>
            <person name="Fletcher C.F."/>
            <person name="Fukushima T."/>
            <person name="Furuno M."/>
            <person name="Futaki S."/>
            <person name="Gariboldi M."/>
            <person name="Georgii-Hemming P."/>
            <person name="Gingeras T.R."/>
            <person name="Gojobori T."/>
            <person name="Green R.E."/>
            <person name="Gustincich S."/>
            <person name="Harbers M."/>
            <person name="Hayashi Y."/>
            <person name="Hensch T.K."/>
            <person name="Hirokawa N."/>
            <person name="Hill D."/>
            <person name="Huminiecki L."/>
            <person name="Iacono M."/>
            <person name="Ikeo K."/>
            <person name="Iwama A."/>
            <person name="Ishikawa T."/>
            <person name="Jakt M."/>
            <person name="Kanapin A."/>
            <person name="Katoh M."/>
            <person name="Kawasawa Y."/>
            <person name="Kelso J."/>
            <person name="Kitamura H."/>
            <person name="Kitano H."/>
            <person name="Kollias G."/>
            <person name="Krishnan S.P."/>
            <person name="Kruger A."/>
            <person name="Kummerfeld S.K."/>
            <person name="Kurochkin I.V."/>
            <person name="Lareau L.F."/>
            <person name="Lazarevic D."/>
            <person name="Lipovich L."/>
            <person name="Liu J."/>
            <person name="Liuni S."/>
            <person name="McWilliam S."/>
            <person name="Madan Babu M."/>
            <person name="Madera M."/>
            <person name="Marchionni L."/>
            <person name="Matsuda H."/>
            <person name="Matsuzawa S."/>
            <person name="Miki H."/>
            <person name="Mignone F."/>
            <person name="Miyake S."/>
            <person name="Morris K."/>
            <person name="Mottagui-Tabar S."/>
            <person name="Mulder N."/>
            <person name="Nakano N."/>
            <person name="Nakauchi H."/>
            <person name="Ng P."/>
            <person name="Nilsson R."/>
            <person name="Nishiguchi S."/>
            <person name="Nishikawa S."/>
            <person name="Nori F."/>
            <person name="Ohara O."/>
            <person name="Okazaki Y."/>
            <person name="Orlando V."/>
            <person name="Pang K.C."/>
            <person name="Pavan W.J."/>
            <person name="Pavesi G."/>
            <person name="Pesole G."/>
            <person name="Petrovsky N."/>
            <person name="Piazza S."/>
            <person name="Reed J."/>
            <person name="Reid J.F."/>
            <person name="Ring B.Z."/>
            <person name="Ringwald M."/>
            <person name="Rost B."/>
            <person name="Ruan Y."/>
            <person name="Salzberg S.L."/>
            <person name="Sandelin A."/>
            <person name="Schneider C."/>
            <person name="Schoenbach C."/>
            <person name="Sekiguchi K."/>
            <person name="Semple C.A."/>
            <person name="Seno S."/>
            <person name="Sessa L."/>
            <person name="Sheng Y."/>
            <person name="Shibata Y."/>
            <person name="Shimada H."/>
            <person name="Shimada K."/>
            <person name="Silva D."/>
            <person name="Sinclair B."/>
            <person name="Sperling S."/>
            <person name="Stupka E."/>
            <person name="Sugiura K."/>
            <person name="Sultana R."/>
            <person name="Takenaka Y."/>
            <person name="Taki K."/>
            <person name="Tammoja K."/>
            <person name="Tan S.L."/>
            <person name="Tang S."/>
            <person name="Taylor M.S."/>
            <person name="Tegner J."/>
            <person name="Teichmann S.A."/>
            <person name="Ueda H.R."/>
            <person name="van Nimwegen E."/>
            <person name="Verardo R."/>
            <person name="Wei C.L."/>
            <person name="Yagi K."/>
            <person name="Yamanishi H."/>
            <person name="Zabarovsky E."/>
            <person name="Zhu S."/>
            <person name="Zimmer A."/>
            <person name="Hide W."/>
            <person name="Bult C."/>
            <person name="Grimmond S.M."/>
            <person name="Teasdale R.D."/>
            <person name="Liu E.T."/>
            <person name="Brusic V."/>
            <person name="Quackenbush J."/>
            <person name="Wahlestedt C."/>
            <person name="Mattick J.S."/>
            <person name="Hume D.A."/>
            <person name="Kai C."/>
            <person name="Sasaki D."/>
            <person name="Tomaru Y."/>
            <person name="Fukuda S."/>
            <person name="Kanamori-Katayama M."/>
            <person name="Suzuki M."/>
            <person name="Aoki J."/>
            <person name="Arakawa T."/>
            <person name="Iida J."/>
            <person name="Imamura K."/>
            <person name="Itoh M."/>
            <person name="Kato T."/>
            <person name="Kawaji H."/>
            <person name="Kawagashira N."/>
            <person name="Kawashima T."/>
            <person name="Kojima M."/>
            <person name="Kondo S."/>
            <person name="Konno H."/>
            <person name="Nakano K."/>
            <person name="Ninomiya N."/>
            <person name="Nishio T."/>
            <person name="Okada M."/>
            <person name="Plessy C."/>
            <person name="Shibata K."/>
            <person name="Shiraki T."/>
            <person name="Suzuki S."/>
            <person name="Tagami M."/>
            <person name="Waki K."/>
            <person name="Watahiki A."/>
            <person name="Okamura-Oho Y."/>
            <person name="Suzuki H."/>
            <person name="Kawai J."/>
            <person name="Hayashizaki Y."/>
        </authorList>
    </citation>
    <scope>NUCLEOTIDE SEQUENCE [LARGE SCALE MRNA]</scope>
    <source>
        <strain>C57BL/6J</strain>
        <strain>NOD</strain>
        <tissue>Hypothalamus</tissue>
        <tissue>Spinal cord</tissue>
    </source>
</reference>
<reference key="5">
    <citation type="submission" date="2005-07" db="EMBL/GenBank/DDBJ databases">
        <authorList>
            <person name="Mural R.J."/>
            <person name="Adams M.D."/>
            <person name="Myers E.W."/>
            <person name="Smith H.O."/>
            <person name="Venter J.C."/>
        </authorList>
    </citation>
    <scope>NUCLEOTIDE SEQUENCE [LARGE SCALE GENOMIC DNA]</scope>
</reference>
<reference key="6">
    <citation type="journal article" date="2004" name="Genome Res.">
        <title>The status, quality, and expansion of the NIH full-length cDNA project: the Mammalian Gene Collection (MGC).</title>
        <authorList>
            <consortium name="The MGC Project Team"/>
        </authorList>
    </citation>
    <scope>NUCLEOTIDE SEQUENCE [LARGE SCALE MRNA]</scope>
    <source>
        <strain>FVB/N</strain>
        <tissue>Eye</tissue>
        <tissue>Mammary tumor</tissue>
    </source>
</reference>
<reference key="7">
    <citation type="journal article" date="1998" name="FEBS Lett.">
        <title>Neuronal expression of fractalkine in the presence and absence of inflammation.</title>
        <authorList>
            <person name="Schwaeble W.J."/>
            <person name="Stover C.M."/>
            <person name="Schall T.J."/>
            <person name="Dairaghi D.J."/>
            <person name="Trinder P.K.E."/>
            <person name="Linington C."/>
            <person name="Iglesias A."/>
            <person name="Schubart A."/>
            <person name="Lynch N.J."/>
            <person name="Weihe E."/>
            <person name="Schaefer M.K.-H."/>
        </authorList>
    </citation>
    <scope>TISSUE SPECIFICITY</scope>
</reference>
<reference key="8">
    <citation type="journal article" date="1999" name="Eur. J. Immunol.">
        <title>Three chemokines with potential functions in T lymphocyte-independent and -dependent B lymphocyte stimulation.</title>
        <authorList>
            <person name="Schaniel C."/>
            <person name="Sallusto F."/>
            <person name="Ruedl C."/>
            <person name="Sideras P."/>
            <person name="Melchers F."/>
            <person name="Rolink A.G."/>
        </authorList>
    </citation>
    <scope>TISSUE SPECIFICITY</scope>
</reference>
<reference key="9">
    <citation type="journal article" date="1999" name="J. Biol. Chem.">
        <title>Molecular uncoupling of fractalkine-mediated cell adhesion and signal transduction. Rapid flow arrest of CX3CR1-expressing cells is independent of G-protein activation.</title>
        <authorList>
            <person name="Haskell C.A."/>
            <person name="Cleary M.D."/>
            <person name="Charo I.F."/>
        </authorList>
    </citation>
    <scope>FUNCTION</scope>
</reference>
<reference key="10">
    <citation type="journal article" date="2001" name="Mol. Cell. Biol.">
        <title>Generation and analysis of mice lacking the chemokine fractalkine.</title>
        <authorList>
            <person name="Cook D.N."/>
            <person name="Chen S.C."/>
            <person name="Sullivan L.M."/>
            <person name="Manfra D.J."/>
            <person name="Wiekowski M.T."/>
            <person name="Prosser D.M."/>
            <person name="Vassileva G."/>
            <person name="Lira S.A."/>
        </authorList>
    </citation>
    <scope>DISRUPTION PHENOTYPE</scope>
</reference>
<reference key="11">
    <citation type="journal article" date="2003" name="J. Clin. Invest.">
        <title>Decreased atherosclerosis in CX3CR1-/- mice reveals a role for fractalkine in atherogenesis.</title>
        <authorList>
            <person name="Lesnik P."/>
            <person name="Haskell C.A."/>
            <person name="Charo I.F."/>
        </authorList>
    </citation>
    <scope>TISSUE SPECIFICITY</scope>
</reference>
<reference key="12">
    <citation type="journal article" date="2009" name="Blood">
        <title>CX3CR1 is required for monocyte homeostasis and atherogenesis by promoting cell survival.</title>
        <authorList>
            <person name="Landsman L."/>
            <person name="Bar-On L."/>
            <person name="Zernecke A."/>
            <person name="Kim K.W."/>
            <person name="Krauthgamer R."/>
            <person name="Shagdarsuren E."/>
            <person name="Lira S.A."/>
            <person name="Weissman I.L."/>
            <person name="Weber C."/>
            <person name="Jung S."/>
        </authorList>
    </citation>
    <scope>FUNCTION</scope>
</reference>
<reference key="13">
    <citation type="journal article" date="2010" name="Cell">
        <title>A tissue-specific atlas of mouse protein phosphorylation and expression.</title>
        <authorList>
            <person name="Huttlin E.L."/>
            <person name="Jedrychowski M.P."/>
            <person name="Elias J.E."/>
            <person name="Goswami T."/>
            <person name="Rad R."/>
            <person name="Beausoleil S.A."/>
            <person name="Villen J."/>
            <person name="Haas W."/>
            <person name="Sowa M.E."/>
            <person name="Gygi S.P."/>
        </authorList>
    </citation>
    <scope>IDENTIFICATION BY MASS SPECTROMETRY [LARGE SCALE ANALYSIS]</scope>
    <source>
        <tissue>Brain</tissue>
    </source>
</reference>
<feature type="signal peptide" evidence="2">
    <location>
        <begin position="1"/>
        <end position="24"/>
    </location>
</feature>
<feature type="chain" id="PRO_0000005253" description="Fractalkine">
    <location>
        <begin position="25"/>
        <end position="395"/>
    </location>
</feature>
<feature type="chain" id="PRO_0000296225" description="Processed fractalkine">
    <location>
        <begin position="25"/>
        <end position="337" status="uncertain"/>
    </location>
</feature>
<feature type="topological domain" description="Extracellular" evidence="2">
    <location>
        <begin position="25"/>
        <end position="336"/>
    </location>
</feature>
<feature type="transmembrane region" description="Helical" evidence="2">
    <location>
        <begin position="337"/>
        <end position="357"/>
    </location>
</feature>
<feature type="topological domain" description="Cytoplasmic" evidence="2">
    <location>
        <begin position="358"/>
        <end position="395"/>
    </location>
</feature>
<feature type="region of interest" description="Chemokine and involved in interaction with ITGAV:ITGB3 and ITGA4:ITGB1" evidence="1">
    <location>
        <begin position="25"/>
        <end position="100"/>
    </location>
</feature>
<feature type="region of interest" description="Mucin-like stalk">
    <location>
        <begin position="101"/>
        <end position="336"/>
    </location>
</feature>
<feature type="region of interest" description="Disordered" evidence="3">
    <location>
        <begin position="148"/>
        <end position="180"/>
    </location>
</feature>
<feature type="region of interest" description="Disordered" evidence="3">
    <location>
        <begin position="201"/>
        <end position="305"/>
    </location>
</feature>
<feature type="compositionally biased region" description="Polar residues" evidence="3">
    <location>
        <begin position="148"/>
        <end position="172"/>
    </location>
</feature>
<feature type="compositionally biased region" description="Polar residues" evidence="3">
    <location>
        <begin position="201"/>
        <end position="210"/>
    </location>
</feature>
<feature type="compositionally biased region" description="Low complexity" evidence="3">
    <location>
        <begin position="218"/>
        <end position="236"/>
    </location>
</feature>
<feature type="site" description="Cleavage; to produce soluble form" evidence="2">
    <location>
        <begin position="337"/>
        <end position="338"/>
    </location>
</feature>
<feature type="disulfide bond" evidence="1">
    <location>
        <begin position="32"/>
        <end position="58"/>
    </location>
</feature>
<feature type="disulfide bond" evidence="1">
    <location>
        <begin position="36"/>
        <end position="74"/>
    </location>
</feature>
<feature type="sequence conflict" description="In Ref. 2; AAB71763." evidence="18" ref="2">
    <original>D</original>
    <variation>G</variation>
    <location>
        <position position="37"/>
    </location>
</feature>
<protein>
    <recommendedName>
        <fullName evidence="13">Fractalkine</fullName>
        <shortName evidence="15">FK</shortName>
    </recommendedName>
    <alternativeName>
        <fullName evidence="14">ABCD-3</fullName>
    </alternativeName>
    <alternativeName>
        <fullName evidence="17">C-X3-C motif chemokine 1</fullName>
    </alternativeName>
    <alternativeName>
        <fullName evidence="17">CX3C membrane-anchored chemokine</fullName>
    </alternativeName>
    <alternativeName>
        <fullName evidence="16">Neurotactin</fullName>
    </alternativeName>
    <alternativeName>
        <fullName>Small-inducible cytokine D1</fullName>
    </alternativeName>
    <component>
        <recommendedName>
            <fullName>Processed fractalkine</fullName>
        </recommendedName>
    </component>
</protein>
<proteinExistence type="evidence at protein level"/>
<sequence length="395" mass="42099">MAPSPLAWLLRLAAFFHLCTLLPGQHLGMTKCEIMCDKMTSRIPVALLIRYQLNQESCGKRAIVLETTQHRRFCADPKEKWVQDAMKHLDHQAAALTKNGGKFEKRVDNVTPGITLATRGLSPSALTKPESATLEDLALELTTISQEARGTMGTSQEPPAAVTGSSLSTSEAQDAGLTAKPQSIGSFEAADISTTVWPSPAVYQSGSSSWAEEKATESPSTTAPSPQVSTTSPSTPEENVGSEGQPPWVQGQDLSPEKSLGSEEINPVHTDNFQERGPGNTVHPSVAPISSEETPSPELVASGSQAPKIEEPIHATADPQKLSVLITPVPDTQAATRRQAVGLLAFLGLLFCLGVAMFAYQSLQGCPRKMAGEMVEGLRYVPRSCGSNSYVLVPV</sequence>
<dbReference type="EMBL" id="AF010586">
    <property type="protein sequence ID" value="AAB66331.1"/>
    <property type="molecule type" value="mRNA"/>
</dbReference>
<dbReference type="EMBL" id="U92565">
    <property type="protein sequence ID" value="AAB71763.1"/>
    <property type="molecule type" value="mRNA"/>
</dbReference>
<dbReference type="EMBL" id="AF071549">
    <property type="protein sequence ID" value="AAD41620.1"/>
    <property type="molecule type" value="mRNA"/>
</dbReference>
<dbReference type="EMBL" id="AK138214">
    <property type="protein sequence ID" value="BAE23585.1"/>
    <property type="molecule type" value="mRNA"/>
</dbReference>
<dbReference type="EMBL" id="AK138472">
    <property type="protein sequence ID" value="BAE23673.1"/>
    <property type="molecule type" value="mRNA"/>
</dbReference>
<dbReference type="EMBL" id="AK138574">
    <property type="protein sequence ID" value="BAE23702.1"/>
    <property type="molecule type" value="mRNA"/>
</dbReference>
<dbReference type="EMBL" id="AK154646">
    <property type="protein sequence ID" value="BAE32737.1"/>
    <property type="molecule type" value="mRNA"/>
</dbReference>
<dbReference type="EMBL" id="CH466525">
    <property type="protein sequence ID" value="EDL11144.1"/>
    <property type="molecule type" value="Genomic_DNA"/>
</dbReference>
<dbReference type="EMBL" id="BC006650">
    <property type="protein sequence ID" value="AAH06650.1"/>
    <property type="molecule type" value="mRNA"/>
</dbReference>
<dbReference type="EMBL" id="BC054838">
    <property type="protein sequence ID" value="AAH54838.1"/>
    <property type="molecule type" value="mRNA"/>
</dbReference>
<dbReference type="CCDS" id="CCDS22548.1"/>
<dbReference type="RefSeq" id="NP_033168.2">
    <property type="nucleotide sequence ID" value="NM_009142.3"/>
</dbReference>
<dbReference type="SMR" id="O35188"/>
<dbReference type="FunCoup" id="O35188">
    <property type="interactions" value="612"/>
</dbReference>
<dbReference type="STRING" id="10090.ENSMUSP00000034230"/>
<dbReference type="GlyGen" id="O35188">
    <property type="glycosylation" value="1 site, 1 O-linked glycan (1 site)"/>
</dbReference>
<dbReference type="iPTMnet" id="O35188"/>
<dbReference type="PhosphoSitePlus" id="O35188"/>
<dbReference type="SwissPalm" id="O35188"/>
<dbReference type="CPTAC" id="non-CPTAC-3612"/>
<dbReference type="jPOST" id="O35188"/>
<dbReference type="PaxDb" id="10090-ENSMUSP00000034230"/>
<dbReference type="PeptideAtlas" id="O35188"/>
<dbReference type="ProteomicsDB" id="299795"/>
<dbReference type="Pumba" id="O35188"/>
<dbReference type="Antibodypedia" id="15022">
    <property type="antibodies" value="793 antibodies from 44 providers"/>
</dbReference>
<dbReference type="DNASU" id="20312"/>
<dbReference type="Ensembl" id="ENSMUST00000034230.7">
    <property type="protein sequence ID" value="ENSMUSP00000034230.6"/>
    <property type="gene ID" value="ENSMUSG00000031778.14"/>
</dbReference>
<dbReference type="GeneID" id="20312"/>
<dbReference type="KEGG" id="mmu:20312"/>
<dbReference type="UCSC" id="uc009mwx.1">
    <property type="organism name" value="mouse"/>
</dbReference>
<dbReference type="AGR" id="MGI:1097153"/>
<dbReference type="CTD" id="6376"/>
<dbReference type="MGI" id="MGI:1097153">
    <property type="gene designation" value="Cx3cl1"/>
</dbReference>
<dbReference type="VEuPathDB" id="HostDB:ENSMUSG00000031778"/>
<dbReference type="eggNOG" id="ENOG502SNIE">
    <property type="taxonomic scope" value="Eukaryota"/>
</dbReference>
<dbReference type="GeneTree" id="ENSGT01130000278316"/>
<dbReference type="HOGENOM" id="CLU_738793_0_0_1"/>
<dbReference type="InParanoid" id="O35188"/>
<dbReference type="OMA" id="QNQESCG"/>
<dbReference type="OrthoDB" id="9447832at2759"/>
<dbReference type="TreeFam" id="TF337534"/>
<dbReference type="Reactome" id="R-MMU-380108">
    <property type="pathway name" value="Chemokine receptors bind chemokines"/>
</dbReference>
<dbReference type="Reactome" id="R-MMU-418594">
    <property type="pathway name" value="G alpha (i) signalling events"/>
</dbReference>
<dbReference type="BioGRID-ORCS" id="20312">
    <property type="hits" value="2 hits in 79 CRISPR screens"/>
</dbReference>
<dbReference type="PRO" id="PR:O35188"/>
<dbReference type="Proteomes" id="UP000000589">
    <property type="component" value="Chromosome 8"/>
</dbReference>
<dbReference type="RNAct" id="O35188">
    <property type="molecule type" value="protein"/>
</dbReference>
<dbReference type="Bgee" id="ENSMUSG00000031778">
    <property type="expression patterns" value="Expressed in perirhinal cortex and 210 other cell types or tissues"/>
</dbReference>
<dbReference type="ExpressionAtlas" id="O35188">
    <property type="expression patterns" value="baseline and differential"/>
</dbReference>
<dbReference type="GO" id="GO:0044297">
    <property type="term" value="C:cell body"/>
    <property type="evidence" value="ECO:0000314"/>
    <property type="project" value="ARUK-UCL"/>
</dbReference>
<dbReference type="GO" id="GO:0009986">
    <property type="term" value="C:cell surface"/>
    <property type="evidence" value="ECO:0000314"/>
    <property type="project" value="MGI"/>
</dbReference>
<dbReference type="GO" id="GO:0005615">
    <property type="term" value="C:extracellular space"/>
    <property type="evidence" value="ECO:0007669"/>
    <property type="project" value="UniProtKB-KW"/>
</dbReference>
<dbReference type="GO" id="GO:0043005">
    <property type="term" value="C:neuron projection"/>
    <property type="evidence" value="ECO:0000314"/>
    <property type="project" value="ARUK-UCL"/>
</dbReference>
<dbReference type="GO" id="GO:0043025">
    <property type="term" value="C:neuronal cell body"/>
    <property type="evidence" value="ECO:0000314"/>
    <property type="project" value="ARUK-UCL"/>
</dbReference>
<dbReference type="GO" id="GO:0005886">
    <property type="term" value="C:plasma membrane"/>
    <property type="evidence" value="ECO:0000314"/>
    <property type="project" value="ARUK-UCL"/>
</dbReference>
<dbReference type="GO" id="GO:0042056">
    <property type="term" value="F:chemoattractant activity"/>
    <property type="evidence" value="ECO:0007669"/>
    <property type="project" value="Ensembl"/>
</dbReference>
<dbReference type="GO" id="GO:0008009">
    <property type="term" value="F:chemokine activity"/>
    <property type="evidence" value="ECO:0000314"/>
    <property type="project" value="MGI"/>
</dbReference>
<dbReference type="GO" id="GO:0031737">
    <property type="term" value="F:CX3C chemokine receptor binding"/>
    <property type="evidence" value="ECO:0000314"/>
    <property type="project" value="UniProtKB"/>
</dbReference>
<dbReference type="GO" id="GO:0045237">
    <property type="term" value="F:CXCR1 chemokine receptor binding"/>
    <property type="evidence" value="ECO:0007669"/>
    <property type="project" value="Ensembl"/>
</dbReference>
<dbReference type="GO" id="GO:0005178">
    <property type="term" value="F:integrin binding"/>
    <property type="evidence" value="ECO:0000250"/>
    <property type="project" value="UniProtKB"/>
</dbReference>
<dbReference type="GO" id="GO:0060055">
    <property type="term" value="P:angiogenesis involved in wound healing"/>
    <property type="evidence" value="ECO:0000315"/>
    <property type="project" value="MGI"/>
</dbReference>
<dbReference type="GO" id="GO:0007155">
    <property type="term" value="P:cell adhesion"/>
    <property type="evidence" value="ECO:0007669"/>
    <property type="project" value="UniProtKB-KW"/>
</dbReference>
<dbReference type="GO" id="GO:0070098">
    <property type="term" value="P:chemokine-mediated signaling pathway"/>
    <property type="evidence" value="ECO:0007669"/>
    <property type="project" value="Ensembl"/>
</dbReference>
<dbReference type="GO" id="GO:0006935">
    <property type="term" value="P:chemotaxis"/>
    <property type="evidence" value="ECO:0000250"/>
    <property type="project" value="UniProtKB"/>
</dbReference>
<dbReference type="GO" id="GO:0019221">
    <property type="term" value="P:cytokine-mediated signaling pathway"/>
    <property type="evidence" value="ECO:0000315"/>
    <property type="project" value="MGI"/>
</dbReference>
<dbReference type="GO" id="GO:0097192">
    <property type="term" value="P:extrinsic apoptotic signaling pathway in absence of ligand"/>
    <property type="evidence" value="ECO:0000314"/>
    <property type="project" value="MGI"/>
</dbReference>
<dbReference type="GO" id="GO:0006955">
    <property type="term" value="P:immune response"/>
    <property type="evidence" value="ECO:0007669"/>
    <property type="project" value="InterPro"/>
</dbReference>
<dbReference type="GO" id="GO:0033622">
    <property type="term" value="P:integrin activation"/>
    <property type="evidence" value="ECO:0000250"/>
    <property type="project" value="UniProtKB"/>
</dbReference>
<dbReference type="GO" id="GO:0002523">
    <property type="term" value="P:leukocyte migration involved in inflammatory response"/>
    <property type="evidence" value="ECO:0000250"/>
    <property type="project" value="UniProtKB"/>
</dbReference>
<dbReference type="GO" id="GO:0048247">
    <property type="term" value="P:lymphocyte chemotaxis"/>
    <property type="evidence" value="ECO:0000314"/>
    <property type="project" value="MGI"/>
</dbReference>
<dbReference type="GO" id="GO:0048246">
    <property type="term" value="P:macrophage chemotaxis"/>
    <property type="evidence" value="ECO:0000315"/>
    <property type="project" value="MGI"/>
</dbReference>
<dbReference type="GO" id="GO:0061518">
    <property type="term" value="P:microglial cell proliferation"/>
    <property type="evidence" value="ECO:0007669"/>
    <property type="project" value="Ensembl"/>
</dbReference>
<dbReference type="GO" id="GO:0030336">
    <property type="term" value="P:negative regulation of cell migration"/>
    <property type="evidence" value="ECO:0007669"/>
    <property type="project" value="Ensembl"/>
</dbReference>
<dbReference type="GO" id="GO:2001240">
    <property type="term" value="P:negative regulation of extrinsic apoptotic signaling pathway in absence of ligand"/>
    <property type="evidence" value="ECO:0000314"/>
    <property type="project" value="MGI"/>
</dbReference>
<dbReference type="GO" id="GO:0110091">
    <property type="term" value="P:negative regulation of hippocampal neuron apoptotic process"/>
    <property type="evidence" value="ECO:0007669"/>
    <property type="project" value="Ensembl"/>
</dbReference>
<dbReference type="GO" id="GO:0032720">
    <property type="term" value="P:negative regulation of tumor necrosis factor production"/>
    <property type="evidence" value="ECO:0007669"/>
    <property type="project" value="Ensembl"/>
</dbReference>
<dbReference type="GO" id="GO:0030593">
    <property type="term" value="P:neutrophil chemotaxis"/>
    <property type="evidence" value="ECO:0000314"/>
    <property type="project" value="MGI"/>
</dbReference>
<dbReference type="GO" id="GO:0032233">
    <property type="term" value="P:positive regulation of actin filament bundle assembly"/>
    <property type="evidence" value="ECO:0007669"/>
    <property type="project" value="Ensembl"/>
</dbReference>
<dbReference type="GO" id="GO:0045766">
    <property type="term" value="P:positive regulation of angiogenesis"/>
    <property type="evidence" value="ECO:0000315"/>
    <property type="project" value="MGI"/>
</dbReference>
<dbReference type="GO" id="GO:0051041">
    <property type="term" value="P:positive regulation of calcium-independent cell-cell adhesion"/>
    <property type="evidence" value="ECO:0007669"/>
    <property type="project" value="Ensembl"/>
</dbReference>
<dbReference type="GO" id="GO:0043123">
    <property type="term" value="P:positive regulation of canonical NF-kappaB signal transduction"/>
    <property type="evidence" value="ECO:0007669"/>
    <property type="project" value="Ensembl"/>
</dbReference>
<dbReference type="GO" id="GO:0008284">
    <property type="term" value="P:positive regulation of cell population proliferation"/>
    <property type="evidence" value="ECO:0007669"/>
    <property type="project" value="Ensembl"/>
</dbReference>
<dbReference type="GO" id="GO:0050729">
    <property type="term" value="P:positive regulation of inflammatory response"/>
    <property type="evidence" value="ECO:0007669"/>
    <property type="project" value="Ensembl"/>
</dbReference>
<dbReference type="GO" id="GO:0043410">
    <property type="term" value="P:positive regulation of MAPK cascade"/>
    <property type="evidence" value="ECO:0007669"/>
    <property type="project" value="Ensembl"/>
</dbReference>
<dbReference type="GO" id="GO:1904141">
    <property type="term" value="P:positive regulation of microglial cell migration"/>
    <property type="evidence" value="ECO:0007669"/>
    <property type="project" value="Ensembl"/>
</dbReference>
<dbReference type="GO" id="GO:0051897">
    <property type="term" value="P:positive regulation of phosphatidylinositol 3-kinase/protein kinase B signal transduction"/>
    <property type="evidence" value="ECO:0007669"/>
    <property type="project" value="Ensembl"/>
</dbReference>
<dbReference type="GO" id="GO:0051281">
    <property type="term" value="P:positive regulation of release of sequestered calcium ion into cytosol"/>
    <property type="evidence" value="ECO:0007669"/>
    <property type="project" value="Ensembl"/>
</dbReference>
<dbReference type="GO" id="GO:0032914">
    <property type="term" value="P:positive regulation of transforming growth factor beta1 production"/>
    <property type="evidence" value="ECO:0000315"/>
    <property type="project" value="MGI"/>
</dbReference>
<dbReference type="GO" id="GO:0031664">
    <property type="term" value="P:regulation of lipopolysaccharide-mediated signaling pathway"/>
    <property type="evidence" value="ECO:0007669"/>
    <property type="project" value="Ensembl"/>
</dbReference>
<dbReference type="GO" id="GO:0042060">
    <property type="term" value="P:wound healing"/>
    <property type="evidence" value="ECO:0000315"/>
    <property type="project" value="MGI"/>
</dbReference>
<dbReference type="CDD" id="cd00274">
    <property type="entry name" value="Chemokine_CX3C"/>
    <property type="match status" value="1"/>
</dbReference>
<dbReference type="FunFam" id="2.40.50.40:FF:000012">
    <property type="entry name" value="C-C motif chemokine"/>
    <property type="match status" value="1"/>
</dbReference>
<dbReference type="Gene3D" id="2.40.50.40">
    <property type="match status" value="1"/>
</dbReference>
<dbReference type="InterPro" id="IPR039809">
    <property type="entry name" value="Chemokine_b/g/d"/>
</dbReference>
<dbReference type="InterPro" id="IPR034127">
    <property type="entry name" value="Chemokine_CX3C"/>
</dbReference>
<dbReference type="InterPro" id="IPR001811">
    <property type="entry name" value="Chemokine_IL8-like_dom"/>
</dbReference>
<dbReference type="InterPro" id="IPR036048">
    <property type="entry name" value="Interleukin_8-like_sf"/>
</dbReference>
<dbReference type="PANTHER" id="PTHR12015:SF92">
    <property type="entry name" value="FRACTALKINE"/>
    <property type="match status" value="1"/>
</dbReference>
<dbReference type="PANTHER" id="PTHR12015">
    <property type="entry name" value="SMALL INDUCIBLE CYTOKINE A"/>
    <property type="match status" value="1"/>
</dbReference>
<dbReference type="Pfam" id="PF00048">
    <property type="entry name" value="IL8"/>
    <property type="match status" value="1"/>
</dbReference>
<dbReference type="PRINTS" id="PR01721">
    <property type="entry name" value="FRACTALKINE"/>
</dbReference>
<dbReference type="SMART" id="SM00199">
    <property type="entry name" value="SCY"/>
    <property type="match status" value="1"/>
</dbReference>
<dbReference type="SUPFAM" id="SSF54117">
    <property type="entry name" value="Interleukin 8-like chemokines"/>
    <property type="match status" value="1"/>
</dbReference>